<dbReference type="EC" id="3.4.21.22" evidence="1"/>
<dbReference type="EMBL" id="AB062470">
    <property type="protein sequence ID" value="BAB58885.1"/>
    <property type="molecule type" value="Genomic_DNA"/>
</dbReference>
<dbReference type="RefSeq" id="NP_001129063.1">
    <property type="nucleotide sequence ID" value="NM_001135591.1"/>
</dbReference>
<dbReference type="SMR" id="Q95ND7"/>
<dbReference type="FunCoup" id="Q95ND7">
    <property type="interactions" value="178"/>
</dbReference>
<dbReference type="STRING" id="9598.ENSPTRP00000047240"/>
<dbReference type="MEROPS" id="S01.214"/>
<dbReference type="GlyCosmos" id="Q95ND7">
    <property type="glycosylation" value="7 sites, No reported glycans"/>
</dbReference>
<dbReference type="PaxDb" id="9598-ENSPTRP00000047240"/>
<dbReference type="Ensembl" id="ENSPTRT00000085797.1">
    <property type="protein sequence ID" value="ENSPTRP00000079315.1"/>
    <property type="gene ID" value="ENSPTRG00000022330.6"/>
</dbReference>
<dbReference type="GeneID" id="465887"/>
<dbReference type="KEGG" id="ptr:465887"/>
<dbReference type="CTD" id="2158"/>
<dbReference type="VGNC" id="VGNC:1389">
    <property type="gene designation" value="F9"/>
</dbReference>
<dbReference type="eggNOG" id="ENOG502QUEV">
    <property type="taxonomic scope" value="Eukaryota"/>
</dbReference>
<dbReference type="GeneTree" id="ENSGT00940000159516"/>
<dbReference type="InParanoid" id="Q95ND7"/>
<dbReference type="OMA" id="SYECWCR"/>
<dbReference type="OrthoDB" id="532at9604"/>
<dbReference type="Proteomes" id="UP000002277">
    <property type="component" value="Chromosome X"/>
</dbReference>
<dbReference type="Bgee" id="ENSPTRG00000022330">
    <property type="expression patterns" value="Expressed in liver and 2 other cell types or tissues"/>
</dbReference>
<dbReference type="GO" id="GO:0005615">
    <property type="term" value="C:extracellular space"/>
    <property type="evidence" value="ECO:0000250"/>
    <property type="project" value="UniProtKB"/>
</dbReference>
<dbReference type="GO" id="GO:0005796">
    <property type="term" value="C:Golgi lumen"/>
    <property type="evidence" value="ECO:0007669"/>
    <property type="project" value="UniProtKB-ARBA"/>
</dbReference>
<dbReference type="GO" id="GO:0005509">
    <property type="term" value="F:calcium ion binding"/>
    <property type="evidence" value="ECO:0000250"/>
    <property type="project" value="UniProtKB"/>
</dbReference>
<dbReference type="GO" id="GO:0004175">
    <property type="term" value="F:endopeptidase activity"/>
    <property type="evidence" value="ECO:0000250"/>
    <property type="project" value="UniProtKB"/>
</dbReference>
<dbReference type="GO" id="GO:0004252">
    <property type="term" value="F:serine-type endopeptidase activity"/>
    <property type="evidence" value="ECO:0000318"/>
    <property type="project" value="GO_Central"/>
</dbReference>
<dbReference type="GO" id="GO:0007596">
    <property type="term" value="P:blood coagulation"/>
    <property type="evidence" value="ECO:0000250"/>
    <property type="project" value="UniProtKB"/>
</dbReference>
<dbReference type="GO" id="GO:0006508">
    <property type="term" value="P:proteolysis"/>
    <property type="evidence" value="ECO:0000250"/>
    <property type="project" value="UniProtKB"/>
</dbReference>
<dbReference type="GO" id="GO:0031638">
    <property type="term" value="P:zymogen activation"/>
    <property type="evidence" value="ECO:0000250"/>
    <property type="project" value="UniProtKB"/>
</dbReference>
<dbReference type="CDD" id="cd00054">
    <property type="entry name" value="EGF_CA"/>
    <property type="match status" value="1"/>
</dbReference>
<dbReference type="CDD" id="cd00190">
    <property type="entry name" value="Tryp_SPc"/>
    <property type="match status" value="1"/>
</dbReference>
<dbReference type="FunFam" id="2.10.25.10:FF:000259">
    <property type="entry name" value="Coagulation factor VII"/>
    <property type="match status" value="1"/>
</dbReference>
<dbReference type="FunFam" id="2.10.25.10:FF:000162">
    <property type="entry name" value="Coagulation factor X (Predicted)"/>
    <property type="match status" value="1"/>
</dbReference>
<dbReference type="FunFam" id="2.40.10.10:FF:000003">
    <property type="entry name" value="Transmembrane serine protease 3"/>
    <property type="match status" value="1"/>
</dbReference>
<dbReference type="FunFam" id="4.10.740.10:FF:000001">
    <property type="entry name" value="vitamin K-dependent protein S"/>
    <property type="match status" value="1"/>
</dbReference>
<dbReference type="Gene3D" id="4.10.740.10">
    <property type="entry name" value="Coagulation Factor IX"/>
    <property type="match status" value="1"/>
</dbReference>
<dbReference type="Gene3D" id="2.10.25.10">
    <property type="entry name" value="Laminin"/>
    <property type="match status" value="2"/>
</dbReference>
<dbReference type="Gene3D" id="2.40.10.10">
    <property type="entry name" value="Trypsin-like serine proteases"/>
    <property type="match status" value="2"/>
</dbReference>
<dbReference type="InterPro" id="IPR017857">
    <property type="entry name" value="Coagulation_fac-like_Gla_dom"/>
</dbReference>
<dbReference type="InterPro" id="IPR001881">
    <property type="entry name" value="EGF-like_Ca-bd_dom"/>
</dbReference>
<dbReference type="InterPro" id="IPR000742">
    <property type="entry name" value="EGF-like_dom"/>
</dbReference>
<dbReference type="InterPro" id="IPR000152">
    <property type="entry name" value="EGF-type_Asp/Asn_hydroxyl_site"/>
</dbReference>
<dbReference type="InterPro" id="IPR018097">
    <property type="entry name" value="EGF_Ca-bd_CS"/>
</dbReference>
<dbReference type="InterPro" id="IPR035972">
    <property type="entry name" value="GLA-like_dom_SF"/>
</dbReference>
<dbReference type="InterPro" id="IPR000294">
    <property type="entry name" value="GLA_domain"/>
</dbReference>
<dbReference type="InterPro" id="IPR012224">
    <property type="entry name" value="Pept_S1A_FX"/>
</dbReference>
<dbReference type="InterPro" id="IPR050442">
    <property type="entry name" value="Peptidase_S1_coag_factors"/>
</dbReference>
<dbReference type="InterPro" id="IPR009003">
    <property type="entry name" value="Peptidase_S1_PA"/>
</dbReference>
<dbReference type="InterPro" id="IPR043504">
    <property type="entry name" value="Peptidase_S1_PA_chymotrypsin"/>
</dbReference>
<dbReference type="InterPro" id="IPR001314">
    <property type="entry name" value="Peptidase_S1A"/>
</dbReference>
<dbReference type="InterPro" id="IPR001254">
    <property type="entry name" value="Trypsin_dom"/>
</dbReference>
<dbReference type="InterPro" id="IPR018114">
    <property type="entry name" value="TRYPSIN_HIS"/>
</dbReference>
<dbReference type="InterPro" id="IPR033116">
    <property type="entry name" value="TRYPSIN_SER"/>
</dbReference>
<dbReference type="PANTHER" id="PTHR24278">
    <property type="entry name" value="COAGULATION FACTOR"/>
    <property type="match status" value="1"/>
</dbReference>
<dbReference type="PANTHER" id="PTHR24278:SF31">
    <property type="entry name" value="COAGULATION FACTOR IX"/>
    <property type="match status" value="1"/>
</dbReference>
<dbReference type="Pfam" id="PF00008">
    <property type="entry name" value="EGF"/>
    <property type="match status" value="1"/>
</dbReference>
<dbReference type="Pfam" id="PF14670">
    <property type="entry name" value="FXa_inhibition"/>
    <property type="match status" value="1"/>
</dbReference>
<dbReference type="Pfam" id="PF00594">
    <property type="entry name" value="Gla"/>
    <property type="match status" value="1"/>
</dbReference>
<dbReference type="Pfam" id="PF00089">
    <property type="entry name" value="Trypsin"/>
    <property type="match status" value="1"/>
</dbReference>
<dbReference type="PIRSF" id="PIRSF001143">
    <property type="entry name" value="Factor_X"/>
    <property type="match status" value="1"/>
</dbReference>
<dbReference type="PRINTS" id="PR00722">
    <property type="entry name" value="CHYMOTRYPSIN"/>
</dbReference>
<dbReference type="PRINTS" id="PR00010">
    <property type="entry name" value="EGFBLOOD"/>
</dbReference>
<dbReference type="PRINTS" id="PR00001">
    <property type="entry name" value="GLABLOOD"/>
</dbReference>
<dbReference type="SMART" id="SM00181">
    <property type="entry name" value="EGF"/>
    <property type="match status" value="2"/>
</dbReference>
<dbReference type="SMART" id="SM00179">
    <property type="entry name" value="EGF_CA"/>
    <property type="match status" value="1"/>
</dbReference>
<dbReference type="SMART" id="SM00069">
    <property type="entry name" value="GLA"/>
    <property type="match status" value="1"/>
</dbReference>
<dbReference type="SMART" id="SM00020">
    <property type="entry name" value="Tryp_SPc"/>
    <property type="match status" value="1"/>
</dbReference>
<dbReference type="SUPFAM" id="SSF57196">
    <property type="entry name" value="EGF/Laminin"/>
    <property type="match status" value="1"/>
</dbReference>
<dbReference type="SUPFAM" id="SSF57630">
    <property type="entry name" value="GLA-domain"/>
    <property type="match status" value="1"/>
</dbReference>
<dbReference type="SUPFAM" id="SSF50494">
    <property type="entry name" value="Trypsin-like serine proteases"/>
    <property type="match status" value="1"/>
</dbReference>
<dbReference type="PROSITE" id="PS00010">
    <property type="entry name" value="ASX_HYDROXYL"/>
    <property type="match status" value="1"/>
</dbReference>
<dbReference type="PROSITE" id="PS00022">
    <property type="entry name" value="EGF_1"/>
    <property type="match status" value="1"/>
</dbReference>
<dbReference type="PROSITE" id="PS01186">
    <property type="entry name" value="EGF_2"/>
    <property type="match status" value="2"/>
</dbReference>
<dbReference type="PROSITE" id="PS50026">
    <property type="entry name" value="EGF_3"/>
    <property type="match status" value="1"/>
</dbReference>
<dbReference type="PROSITE" id="PS01187">
    <property type="entry name" value="EGF_CA"/>
    <property type="match status" value="1"/>
</dbReference>
<dbReference type="PROSITE" id="PS00011">
    <property type="entry name" value="GLA_1"/>
    <property type="match status" value="1"/>
</dbReference>
<dbReference type="PROSITE" id="PS50998">
    <property type="entry name" value="GLA_2"/>
    <property type="match status" value="1"/>
</dbReference>
<dbReference type="PROSITE" id="PS50240">
    <property type="entry name" value="TRYPSIN_DOM"/>
    <property type="match status" value="1"/>
</dbReference>
<dbReference type="PROSITE" id="PS00134">
    <property type="entry name" value="TRYPSIN_HIS"/>
    <property type="match status" value="1"/>
</dbReference>
<dbReference type="PROSITE" id="PS00135">
    <property type="entry name" value="TRYPSIN_SER"/>
    <property type="match status" value="1"/>
</dbReference>
<name>FA9_PANTR</name>
<accession>Q95ND7</accession>
<protein>
    <recommendedName>
        <fullName>Coagulation factor IX</fullName>
        <ecNumber evidence="1">3.4.21.22</ecNumber>
    </recommendedName>
    <alternativeName>
        <fullName>Christmas factor</fullName>
    </alternativeName>
    <component>
        <recommendedName>
            <fullName>Coagulation factor IXa light chain</fullName>
        </recommendedName>
    </component>
    <component>
        <recommendedName>
            <fullName>Coagulation factor IXa heavy chain</fullName>
        </recommendedName>
    </component>
</protein>
<proteinExistence type="inferred from homology"/>
<comment type="function">
    <text evidence="1">Factor IX is a vitamin K-dependent plasma protein that participates in the intrinsic pathway of blood coagulation by converting factor X to its active form in the presence of Ca(2+) ions, phospholipids, and factor VIIIa.</text>
</comment>
<comment type="catalytic activity">
    <reaction evidence="1">
        <text>Selective cleavage of Arg-|-Ile bond in factor X to form factor Xa.</text>
        <dbReference type="EC" id="3.4.21.22"/>
    </reaction>
</comment>
<comment type="subunit">
    <text evidence="1">Heterodimer of a light chain and a heavy chain; disulfide-linked. Interacts (inactive and activated) with F11 (activated) in calcium-dependent manner. Interacts with SERPINC1.</text>
</comment>
<comment type="subcellular location">
    <subcellularLocation>
        <location evidence="1">Secreted</location>
    </subcellularLocation>
</comment>
<comment type="domain">
    <text evidence="2">Calcium binds to the gamma-carboxyglutamic acid (Gla) residues in the Gla domain. Calcium can also bind, with stronger affinity, to another site beyond the Gla domain. Under physiological ion concentrations, Ca(2+) is displaced by Mg(2+) from some of the gammaglutamate residues in the N-terminal Gla domain. This leads to a subtle conformation change that may affect the interaction with its binding protein.</text>
</comment>
<comment type="PTM">
    <text evidence="1">Activated by factor XIa, which excises the activation peptide. The propeptide can also be removed by snake venom protease.</text>
</comment>
<comment type="PTM">
    <text evidence="1">The iron and 2-oxoglutarate dependent 3-hydroxylation of aspartate and asparagine is (R) stereospecific within EGF domains (By similarity). Activated by coagulation factor VIIa-tissue factor (F7-F3) complex in calcium-dependent manner (By similarity).</text>
</comment>
<comment type="PTM">
    <text evidence="1">Predominantly O-glucosylated at Ser-99 by POGLUT1 in vitro.</text>
</comment>
<comment type="similarity">
    <text evidence="5">Belongs to the peptidase S1 family.</text>
</comment>
<keyword id="KW-0094">Blood coagulation</keyword>
<keyword id="KW-0106">Calcium</keyword>
<keyword id="KW-0165">Cleavage on pair of basic residues</keyword>
<keyword id="KW-1015">Disulfide bond</keyword>
<keyword id="KW-0245">EGF-like domain</keyword>
<keyword id="KW-0301">Gamma-carboxyglutamic acid</keyword>
<keyword id="KW-0325">Glycoprotein</keyword>
<keyword id="KW-0356">Hemostasis</keyword>
<keyword id="KW-0378">Hydrolase</keyword>
<keyword id="KW-0379">Hydroxylation</keyword>
<keyword id="KW-0460">Magnesium</keyword>
<keyword id="KW-0479">Metal-binding</keyword>
<keyword id="KW-0597">Phosphoprotein</keyword>
<keyword id="KW-0645">Protease</keyword>
<keyword id="KW-1185">Reference proteome</keyword>
<keyword id="KW-0677">Repeat</keyword>
<keyword id="KW-0964">Secreted</keyword>
<keyword id="KW-0720">Serine protease</keyword>
<keyword id="KW-0732">Signal</keyword>
<keyword id="KW-0765">Sulfation</keyword>
<keyword id="KW-0865">Zymogen</keyword>
<feature type="signal peptide" evidence="3">
    <location>
        <begin position="1"/>
        <end position="28"/>
    </location>
</feature>
<feature type="propeptide" id="PRO_0000027765" evidence="1">
    <location>
        <begin position="29"/>
        <end position="46"/>
    </location>
</feature>
<feature type="chain" id="PRO_0000027766" description="Coagulation factor IX">
    <location>
        <begin position="47"/>
        <end position="461"/>
    </location>
</feature>
<feature type="chain" id="PRO_0000027767" description="Coagulation factor IXa light chain">
    <location>
        <begin position="47"/>
        <end position="191"/>
    </location>
</feature>
<feature type="propeptide" id="PRO_0000027768" description="Activation peptide">
    <location>
        <begin position="192"/>
        <end position="226"/>
    </location>
</feature>
<feature type="chain" id="PRO_0000027769" description="Coagulation factor IXa heavy chain">
    <location>
        <begin position="227"/>
        <end position="461"/>
    </location>
</feature>
<feature type="domain" description="Gla" evidence="6">
    <location>
        <begin position="47"/>
        <end position="92"/>
    </location>
</feature>
<feature type="domain" description="EGF-like 1; calcium-binding" evidence="4">
    <location>
        <begin position="93"/>
        <end position="129"/>
    </location>
</feature>
<feature type="domain" description="EGF-like 2" evidence="4">
    <location>
        <begin position="130"/>
        <end position="171"/>
    </location>
</feature>
<feature type="domain" description="Peptidase S1" evidence="5">
    <location>
        <begin position="227"/>
        <end position="459"/>
    </location>
</feature>
<feature type="active site" description="Charge relay system" evidence="1">
    <location>
        <position position="267"/>
    </location>
</feature>
<feature type="active site" description="Charge relay system" evidence="1">
    <location>
        <position position="315"/>
    </location>
</feature>
<feature type="active site" description="Charge relay system" evidence="1">
    <location>
        <position position="411"/>
    </location>
</feature>
<feature type="binding site" evidence="1">
    <location>
        <position position="47"/>
    </location>
    <ligand>
        <name>Ca(2+)</name>
        <dbReference type="ChEBI" id="CHEBI:29108"/>
        <label>1</label>
    </ligand>
</feature>
<feature type="binding site" evidence="1">
    <location>
        <position position="48"/>
    </location>
    <ligand>
        <name>Ca(2+)</name>
        <dbReference type="ChEBI" id="CHEBI:29108"/>
        <label>2</label>
    </ligand>
</feature>
<feature type="binding site" description="via 4-carboxyglutamate" evidence="1">
    <location>
        <position position="53"/>
    </location>
    <ligand>
        <name>Ca(2+)</name>
        <dbReference type="ChEBI" id="CHEBI:29108"/>
        <label>1</label>
    </ligand>
</feature>
<feature type="binding site" description="via 4-carboxyglutamate" evidence="1">
    <location>
        <position position="53"/>
    </location>
    <ligand>
        <name>Ca(2+)</name>
        <dbReference type="ChEBI" id="CHEBI:29108"/>
        <label>2</label>
    </ligand>
</feature>
<feature type="binding site" description="via 4-carboxyglutamate" evidence="1">
    <location>
        <position position="54"/>
    </location>
    <ligand>
        <name>Ca(2+)</name>
        <dbReference type="ChEBI" id="CHEBI:29108"/>
        <label>2</label>
    </ligand>
</feature>
<feature type="binding site" description="via 4-carboxyglutamate" evidence="1">
    <location>
        <position position="54"/>
    </location>
    <ligand>
        <name>Ca(2+)</name>
        <dbReference type="ChEBI" id="CHEBI:29108"/>
        <label>3</label>
    </ligand>
</feature>
<feature type="binding site" description="via 4-carboxyglutamate" evidence="1">
    <location>
        <position position="61"/>
    </location>
    <ligand>
        <name>Ca(2+)</name>
        <dbReference type="ChEBI" id="CHEBI:29108"/>
        <label>4</label>
    </ligand>
</feature>
<feature type="binding site" description="via 4-carboxyglutamate" evidence="1">
    <location>
        <position position="61"/>
    </location>
    <ligand>
        <name>Mg(2+)</name>
        <dbReference type="ChEBI" id="CHEBI:18420"/>
        <label>1</label>
    </ligand>
</feature>
<feature type="binding site" description="via 4-carboxyglutamate" evidence="1">
    <location>
        <position position="63"/>
    </location>
    <ligand>
        <name>Ca(2+)</name>
        <dbReference type="ChEBI" id="CHEBI:29108"/>
        <label>1</label>
    </ligand>
</feature>
<feature type="binding site" description="via 4-carboxyglutamate" evidence="1">
    <location>
        <position position="63"/>
    </location>
    <ligand>
        <name>Ca(2+)</name>
        <dbReference type="ChEBI" id="CHEBI:29108"/>
        <label>2</label>
    </ligand>
</feature>
<feature type="binding site" description="via 4-carboxyglutamate" evidence="1">
    <location>
        <position position="63"/>
    </location>
    <ligand>
        <name>Ca(2+)</name>
        <dbReference type="ChEBI" id="CHEBI:29108"/>
        <label>3</label>
    </ligand>
</feature>
<feature type="binding site" description="via 4-carboxyglutamate" evidence="1">
    <location>
        <position position="66"/>
    </location>
    <ligand>
        <name>Ca(2+)</name>
        <dbReference type="ChEBI" id="CHEBI:29108"/>
        <label>4</label>
    </ligand>
</feature>
<feature type="binding site" description="via 4-carboxyglutamate" evidence="1">
    <location>
        <position position="66"/>
    </location>
    <ligand>
        <name>Mg(2+)</name>
        <dbReference type="ChEBI" id="CHEBI:18420"/>
        <label>1</label>
    </ligand>
</feature>
<feature type="binding site" description="via 4-carboxyglutamate" evidence="1">
    <location>
        <position position="67"/>
    </location>
    <ligand>
        <name>Ca(2+)</name>
        <dbReference type="ChEBI" id="CHEBI:29108"/>
        <label>1</label>
    </ligand>
</feature>
<feature type="binding site" description="via 4-carboxyglutamate" evidence="1">
    <location>
        <position position="72"/>
    </location>
    <ligand>
        <name>Ca(2+)</name>
        <dbReference type="ChEBI" id="CHEBI:29108"/>
        <label>5</label>
    </ligand>
</feature>
<feature type="binding site" description="via 4-carboxyglutamate" evidence="1">
    <location>
        <position position="72"/>
    </location>
    <ligand>
        <name>Mg(2+)</name>
        <dbReference type="ChEBI" id="CHEBI:18420"/>
        <label>2</label>
    </ligand>
</feature>
<feature type="binding site" description="via 4-carboxyglutamate" evidence="1">
    <location>
        <position position="73"/>
    </location>
    <ligand>
        <name>Ca(2+)</name>
        <dbReference type="ChEBI" id="CHEBI:29108"/>
        <label>2</label>
    </ligand>
</feature>
<feature type="binding site" description="via 4-carboxyglutamate" evidence="1">
    <location>
        <position position="73"/>
    </location>
    <ligand>
        <name>Ca(2+)</name>
        <dbReference type="ChEBI" id="CHEBI:29108"/>
        <label>3</label>
    </ligand>
</feature>
<feature type="binding site" description="via 4-carboxyglutamate" evidence="1">
    <location>
        <position position="76"/>
    </location>
    <ligand>
        <name>Ca(2+)</name>
        <dbReference type="ChEBI" id="CHEBI:29108"/>
        <label>3</label>
    </ligand>
</feature>
<feature type="binding site" description="via 4-carboxyglutamate" evidence="1">
    <location>
        <position position="76"/>
    </location>
    <ligand>
        <name>Ca(2+)</name>
        <dbReference type="ChEBI" id="CHEBI:29108"/>
        <label>5</label>
    </ligand>
</feature>
<feature type="binding site" description="via 4-carboxyglutamate" evidence="1">
    <location>
        <position position="76"/>
    </location>
    <ligand>
        <name>Mg(2+)</name>
        <dbReference type="ChEBI" id="CHEBI:18420"/>
        <label>2</label>
    </ligand>
</feature>
<feature type="binding site" description="via 4-carboxyglutamate" evidence="1">
    <location>
        <position position="82"/>
    </location>
    <ligand>
        <name>Ca(2+)</name>
        <dbReference type="ChEBI" id="CHEBI:29108"/>
        <label>6</label>
    </ligand>
</feature>
<feature type="binding site" description="via 4-carboxyglutamate" evidence="1">
    <location>
        <position position="82"/>
    </location>
    <ligand>
        <name>Mg(2+)</name>
        <dbReference type="ChEBI" id="CHEBI:18420"/>
        <label>3</label>
    </ligand>
</feature>
<feature type="binding site" description="via 4-carboxyglutamate" evidence="1">
    <location>
        <position position="86"/>
    </location>
    <ligand>
        <name>Ca(2+)</name>
        <dbReference type="ChEBI" id="CHEBI:29108"/>
        <label>6</label>
    </ligand>
</feature>
<feature type="binding site" description="via 4-carboxyglutamate" evidence="1">
    <location>
        <position position="86"/>
    </location>
    <ligand>
        <name>Mg(2+)</name>
        <dbReference type="ChEBI" id="CHEBI:18420"/>
        <label>3</label>
    </ligand>
</feature>
<feature type="binding site" evidence="1">
    <location>
        <position position="93"/>
    </location>
    <ligand>
        <name>Ca(2+)</name>
        <dbReference type="ChEBI" id="CHEBI:29108"/>
        <label>7</label>
    </ligand>
</feature>
<feature type="binding site" evidence="1">
    <location>
        <position position="94"/>
    </location>
    <ligand>
        <name>Ca(2+)</name>
        <dbReference type="ChEBI" id="CHEBI:29108"/>
        <label>7</label>
    </ligand>
</feature>
<feature type="binding site" evidence="1">
    <location>
        <position position="96"/>
    </location>
    <ligand>
        <name>Ca(2+)</name>
        <dbReference type="ChEBI" id="CHEBI:29108"/>
        <label>7</label>
    </ligand>
</feature>
<feature type="binding site" evidence="1">
    <location>
        <position position="110"/>
    </location>
    <ligand>
        <name>Ca(2+)</name>
        <dbReference type="ChEBI" id="CHEBI:29108"/>
        <label>7</label>
    </ligand>
</feature>
<feature type="binding site" evidence="1">
    <location>
        <position position="111"/>
    </location>
    <ligand>
        <name>Ca(2+)</name>
        <dbReference type="ChEBI" id="CHEBI:29108"/>
        <label>7</label>
    </ligand>
</feature>
<feature type="binding site" evidence="1">
    <location>
        <position position="281"/>
    </location>
    <ligand>
        <name>Ca(2+)</name>
        <dbReference type="ChEBI" id="CHEBI:29108"/>
        <label>8</label>
    </ligand>
</feature>
<feature type="binding site" evidence="1">
    <location>
        <position position="283"/>
    </location>
    <ligand>
        <name>Ca(2+)</name>
        <dbReference type="ChEBI" id="CHEBI:29108"/>
        <label>8</label>
    </ligand>
</feature>
<feature type="binding site" evidence="1">
    <location>
        <position position="286"/>
    </location>
    <ligand>
        <name>Ca(2+)</name>
        <dbReference type="ChEBI" id="CHEBI:29108"/>
        <label>8</label>
    </ligand>
</feature>
<feature type="binding site" evidence="1">
    <location>
        <position position="288"/>
    </location>
    <ligand>
        <name>Ca(2+)</name>
        <dbReference type="ChEBI" id="CHEBI:29108"/>
        <label>8</label>
    </ligand>
</feature>
<feature type="binding site" evidence="1">
    <location>
        <position position="291"/>
    </location>
    <ligand>
        <name>Ca(2+)</name>
        <dbReference type="ChEBI" id="CHEBI:29108"/>
        <label>8</label>
    </ligand>
</feature>
<feature type="site" description="Cleavage; by factor XIa">
    <location>
        <begin position="191"/>
        <end position="192"/>
    </location>
</feature>
<feature type="site" description="Cleavage; by factor XIa">
    <location>
        <begin position="226"/>
        <end position="227"/>
    </location>
</feature>
<feature type="modified residue" description="4-carboxyglutamate" evidence="2 6">
    <location>
        <position position="53"/>
    </location>
</feature>
<feature type="modified residue" description="4-carboxyglutamate" evidence="2 6">
    <location>
        <position position="54"/>
    </location>
</feature>
<feature type="modified residue" description="4-carboxyglutamate" evidence="2 6">
    <location>
        <position position="61"/>
    </location>
</feature>
<feature type="modified residue" description="4-carboxyglutamate" evidence="2 6">
    <location>
        <position position="63"/>
    </location>
</feature>
<feature type="modified residue" description="4-carboxyglutamate" evidence="2 6">
    <location>
        <position position="66"/>
    </location>
</feature>
<feature type="modified residue" description="4-carboxyglutamate" evidence="2 6">
    <location>
        <position position="67"/>
    </location>
</feature>
<feature type="modified residue" description="4-carboxyglutamate" evidence="2 6">
    <location>
        <position position="72"/>
    </location>
</feature>
<feature type="modified residue" description="4-carboxyglutamate" evidence="2 6">
    <location>
        <position position="73"/>
    </location>
</feature>
<feature type="modified residue" description="4-carboxyglutamate" evidence="2 6">
    <location>
        <position position="76"/>
    </location>
</feature>
<feature type="modified residue" description="4-carboxyglutamate" evidence="2 6">
    <location>
        <position position="79"/>
    </location>
</feature>
<feature type="modified residue" description="4-carboxyglutamate" evidence="2 6">
    <location>
        <position position="82"/>
    </location>
</feature>
<feature type="modified residue" description="4-carboxyglutamate" evidence="2 6">
    <location>
        <position position="86"/>
    </location>
</feature>
<feature type="modified residue" description="(3R)-3-hydroxyaspartate" evidence="1">
    <location>
        <position position="110"/>
    </location>
</feature>
<feature type="modified residue" description="Phosphoserine" evidence="1">
    <location>
        <position position="114"/>
    </location>
</feature>
<feature type="modified residue" description="Sulfotyrosine" evidence="1">
    <location>
        <position position="201"/>
    </location>
</feature>
<feature type="modified residue" description="Phosphoserine" evidence="1">
    <location>
        <position position="204"/>
    </location>
</feature>
<feature type="modified residue" description="Phosphothreonine; alternate" evidence="1">
    <location>
        <position position="205"/>
    </location>
</feature>
<feature type="glycosylation site" description="O-linked (GalNAc...) threonine" evidence="1">
    <location>
        <position position="85"/>
    </location>
</feature>
<feature type="glycosylation site" description="O-linked (Glc...) serine" evidence="1">
    <location>
        <position position="99"/>
    </location>
</feature>
<feature type="glycosylation site" description="O-linked (Fuc...) serine" evidence="1">
    <location>
        <position position="107"/>
    </location>
</feature>
<feature type="glycosylation site" description="O-linked (GalNAc...) threonine; alternate" evidence="1">
    <location>
        <position position="205"/>
    </location>
</feature>
<feature type="glycosylation site" description="N-linked (GlcNAc...) asparagine" evidence="3">
    <location>
        <position position="213"/>
    </location>
</feature>
<feature type="glycosylation site" description="O-linked (GalNAc...) threonine" evidence="1">
    <location>
        <position position="215"/>
    </location>
</feature>
<feature type="glycosylation site" description="O-linked (GalNAc...) threonine" evidence="1">
    <location>
        <position position="225"/>
    </location>
</feature>
<feature type="disulfide bond" evidence="1">
    <location>
        <begin position="64"/>
        <end position="69"/>
    </location>
</feature>
<feature type="disulfide bond" evidence="1">
    <location>
        <begin position="97"/>
        <end position="108"/>
    </location>
</feature>
<feature type="disulfide bond" evidence="1">
    <location>
        <begin position="102"/>
        <end position="117"/>
    </location>
</feature>
<feature type="disulfide bond" evidence="1">
    <location>
        <begin position="119"/>
        <end position="128"/>
    </location>
</feature>
<feature type="disulfide bond" evidence="1">
    <location>
        <begin position="134"/>
        <end position="145"/>
    </location>
</feature>
<feature type="disulfide bond" evidence="1">
    <location>
        <begin position="141"/>
        <end position="155"/>
    </location>
</feature>
<feature type="disulfide bond" evidence="1">
    <location>
        <begin position="157"/>
        <end position="170"/>
    </location>
</feature>
<feature type="disulfide bond" description="Interchain (between light and heavy chains)" evidence="1">
    <location>
        <begin position="178"/>
        <end position="335"/>
    </location>
</feature>
<feature type="disulfide bond" evidence="1">
    <location>
        <begin position="252"/>
        <end position="268"/>
    </location>
</feature>
<feature type="disulfide bond" evidence="1">
    <location>
        <begin position="382"/>
        <end position="396"/>
    </location>
</feature>
<feature type="disulfide bond" evidence="1">
    <location>
        <begin position="407"/>
        <end position="435"/>
    </location>
</feature>
<evidence type="ECO:0000250" key="1">
    <source>
        <dbReference type="UniProtKB" id="P00740"/>
    </source>
</evidence>
<evidence type="ECO:0000250" key="2">
    <source>
        <dbReference type="UniProtKB" id="P00741"/>
    </source>
</evidence>
<evidence type="ECO:0000255" key="3"/>
<evidence type="ECO:0000255" key="4">
    <source>
        <dbReference type="PROSITE-ProRule" id="PRU00076"/>
    </source>
</evidence>
<evidence type="ECO:0000255" key="5">
    <source>
        <dbReference type="PROSITE-ProRule" id="PRU00274"/>
    </source>
</evidence>
<evidence type="ECO:0000255" key="6">
    <source>
        <dbReference type="PROSITE-ProRule" id="PRU00463"/>
    </source>
</evidence>
<gene>
    <name type="primary">F9</name>
</gene>
<reference key="1">
    <citation type="journal article" date="2001" name="Genes Genet. Syst.">
        <title>Comparison of DNA and protein polymorphisms between humans and chimpanzees.</title>
        <authorList>
            <person name="Satta Y."/>
        </authorList>
    </citation>
    <scope>NUCLEOTIDE SEQUENCE [GENOMIC DNA]</scope>
    <source>
        <strain>Isolate 504</strain>
    </source>
</reference>
<sequence length="461" mass="51764">MQRVNMIMAESPGLITICLLGYLLSAECTVFLDHENANKILNRPKRYNSGKLEEFVQGNLERECMEEKCSFEEAREVFENTERTTEFWKQYVDGDQCESNPCLNGGSCKDDINSYECWCPFGFEGKNCELDVTCNIKNGRCEQFCKNSADNKVVCSCTEGYRLAENQKSCEPAVPFPCGRVSVSQTSKLTRAETVFPDVDYVNSTEAETILDNITQSTQSFNDFTRVVGGEDAKPGQFPWQVVLNGKVDAFCGGSIVNEKWIVTAAHCVDTGVKITVVAGEHNIEETEHTEQKRNVIRIIPHHNYNAAINKYNHDIALLELDEPLVLNSYVTPICIADKEYTNIFLKFGSGYVSGWGRVFHKGRSALVLQYLRVPLVDRATCLRSTKFTIYNNMFCAGFHEGGRDSCQGDSGGPHVTEVEGTSFLTGIISWGEECAMKGKYGIYTKVSRYVNWIKEKTKLT</sequence>
<organism>
    <name type="scientific">Pan troglodytes</name>
    <name type="common">Chimpanzee</name>
    <dbReference type="NCBI Taxonomy" id="9598"/>
    <lineage>
        <taxon>Eukaryota</taxon>
        <taxon>Metazoa</taxon>
        <taxon>Chordata</taxon>
        <taxon>Craniata</taxon>
        <taxon>Vertebrata</taxon>
        <taxon>Euteleostomi</taxon>
        <taxon>Mammalia</taxon>
        <taxon>Eutheria</taxon>
        <taxon>Euarchontoglires</taxon>
        <taxon>Primates</taxon>
        <taxon>Haplorrhini</taxon>
        <taxon>Catarrhini</taxon>
        <taxon>Hominidae</taxon>
        <taxon>Pan</taxon>
    </lineage>
</organism>